<reference key="1">
    <citation type="journal article" date="1997" name="Nature">
        <title>Molecular basis of symbiosis between Rhizobium and legumes.</title>
        <authorList>
            <person name="Freiberg C.A."/>
            <person name="Fellay R."/>
            <person name="Bairoch A."/>
            <person name="Broughton W.J."/>
            <person name="Rosenthal A."/>
            <person name="Perret X."/>
        </authorList>
    </citation>
    <scope>NUCLEOTIDE SEQUENCE [LARGE SCALE GENOMIC DNA]</scope>
    <source>
        <strain>NBRC 101917 / NGR234</strain>
    </source>
</reference>
<reference key="2">
    <citation type="journal article" date="2009" name="Appl. Environ. Microbiol.">
        <title>Rhizobium sp. strain NGR234 possesses a remarkable number of secretion systems.</title>
        <authorList>
            <person name="Schmeisser C."/>
            <person name="Liesegang H."/>
            <person name="Krysciak D."/>
            <person name="Bakkou N."/>
            <person name="Le Quere A."/>
            <person name="Wollherr A."/>
            <person name="Heinemeyer I."/>
            <person name="Morgenstern B."/>
            <person name="Pommerening-Roeser A."/>
            <person name="Flores M."/>
            <person name="Palacios R."/>
            <person name="Brenner S."/>
            <person name="Gottschalk G."/>
            <person name="Schmitz R.A."/>
            <person name="Broughton W.J."/>
            <person name="Perret X."/>
            <person name="Strittmatter A.W."/>
            <person name="Streit W.R."/>
        </authorList>
    </citation>
    <scope>NUCLEOTIDE SEQUENCE [LARGE SCALE GENOMIC DNA]</scope>
    <source>
        <strain>NBRC 101917 / NGR234</strain>
    </source>
</reference>
<keyword id="KW-0229">DNA integration</keyword>
<keyword id="KW-0233">DNA recombination</keyword>
<keyword id="KW-0238">DNA-binding</keyword>
<keyword id="KW-0614">Plasmid</keyword>
<keyword id="KW-1185">Reference proteome</keyword>
<keyword id="KW-0814">Transposable element</keyword>
<keyword id="KW-1179">Viral genome integration</keyword>
<keyword id="KW-1160">Virus entry into host cell</keyword>
<sequence>MTAFARFLGEKVERYIDLRHSLGYAFSKQAGTLRAFVRYVERAQFDAPATRTMALDFVLSFGGAANSRATRHGVLRRFYEYLAVYDAQTEALKRRAFPRSRAIPPPRILSEAELASLIDACARISPGIPLRGLTMATLIGLLASSGLRSGEVVRLDRSDVDLTNGVLLVRKTKFRKDRLVPVHATTQTALCRYARERDAAFPSPKDQAFFLSSRGNRLSATGLQCGFAQVRKFAGLDDGKTLRPHDLRHRFAVTRMSLWHQQRANVQALLPVLATYLGHANYSDTAYYLTGSVDLLAMAAERAFLDGGAA</sequence>
<accession>P55638</accession>
<organism>
    <name type="scientific">Sinorhizobium fredii (strain NBRC 101917 / NGR234)</name>
    <dbReference type="NCBI Taxonomy" id="394"/>
    <lineage>
        <taxon>Bacteria</taxon>
        <taxon>Pseudomonadati</taxon>
        <taxon>Pseudomonadota</taxon>
        <taxon>Alphaproteobacteria</taxon>
        <taxon>Hyphomicrobiales</taxon>
        <taxon>Rhizobiaceae</taxon>
        <taxon>Sinorhizobium/Ensifer group</taxon>
        <taxon>Sinorhizobium</taxon>
    </lineage>
</organism>
<protein>
    <recommendedName>
        <fullName>Putative integrase/recombinase y4rE</fullName>
    </recommendedName>
</protein>
<feature type="chain" id="PRO_0000197581" description="Putative integrase/recombinase y4rE">
    <location>
        <begin position="1"/>
        <end position="310"/>
    </location>
</feature>
<feature type="domain" description="Core-binding (CB)" evidence="2">
    <location>
        <begin position="6"/>
        <end position="83"/>
    </location>
</feature>
<feature type="domain" description="Tyr recombinase" evidence="1">
    <location>
        <begin position="104"/>
        <end position="301"/>
    </location>
</feature>
<feature type="active site" evidence="1">
    <location>
        <position position="148"/>
    </location>
</feature>
<feature type="active site" evidence="1">
    <location>
        <position position="173"/>
    </location>
</feature>
<feature type="active site" evidence="1">
    <location>
        <position position="245"/>
    </location>
</feature>
<feature type="active site" evidence="1">
    <location>
        <position position="248"/>
    </location>
</feature>
<feature type="active site" evidence="1">
    <location>
        <position position="279"/>
    </location>
</feature>
<feature type="active site" description="O-(3'-phospho-DNA)-tyrosine intermediate" evidence="1">
    <location>
        <position position="288"/>
    </location>
</feature>
<evidence type="ECO:0000255" key="1">
    <source>
        <dbReference type="PROSITE-ProRule" id="PRU01246"/>
    </source>
</evidence>
<evidence type="ECO:0000255" key="2">
    <source>
        <dbReference type="PROSITE-ProRule" id="PRU01248"/>
    </source>
</evidence>
<evidence type="ECO:0000305" key="3"/>
<proteinExistence type="inferred from homology"/>
<geneLocation type="plasmid">
    <name>sym pNGR234a</name>
</geneLocation>
<dbReference type="EMBL" id="U00090">
    <property type="protein sequence ID" value="AAB92471.1"/>
    <property type="molecule type" value="Genomic_DNA"/>
</dbReference>
<dbReference type="RefSeq" id="NP_444043.1">
    <property type="nucleotide sequence ID" value="NC_000914.2"/>
</dbReference>
<dbReference type="RefSeq" id="WP_010875216.1">
    <property type="nucleotide sequence ID" value="NC_000914.2"/>
</dbReference>
<dbReference type="SMR" id="P55638"/>
<dbReference type="KEGG" id="rhi:NGR_a01820"/>
<dbReference type="PATRIC" id="fig|394.7.peg.180"/>
<dbReference type="eggNOG" id="COG0582">
    <property type="taxonomic scope" value="Bacteria"/>
</dbReference>
<dbReference type="HOGENOM" id="CLU_027562_10_0_5"/>
<dbReference type="OrthoDB" id="5464621at2"/>
<dbReference type="Proteomes" id="UP000001054">
    <property type="component" value="Plasmid pNGR234a"/>
</dbReference>
<dbReference type="GO" id="GO:0003677">
    <property type="term" value="F:DNA binding"/>
    <property type="evidence" value="ECO:0007669"/>
    <property type="project" value="UniProtKB-KW"/>
</dbReference>
<dbReference type="GO" id="GO:0015074">
    <property type="term" value="P:DNA integration"/>
    <property type="evidence" value="ECO:0007669"/>
    <property type="project" value="UniProtKB-KW"/>
</dbReference>
<dbReference type="GO" id="GO:0006310">
    <property type="term" value="P:DNA recombination"/>
    <property type="evidence" value="ECO:0007669"/>
    <property type="project" value="UniProtKB-KW"/>
</dbReference>
<dbReference type="GO" id="GO:0075713">
    <property type="term" value="P:establishment of integrated proviral latency"/>
    <property type="evidence" value="ECO:0007669"/>
    <property type="project" value="UniProtKB-KW"/>
</dbReference>
<dbReference type="GO" id="GO:0046718">
    <property type="term" value="P:symbiont entry into host cell"/>
    <property type="evidence" value="ECO:0007669"/>
    <property type="project" value="UniProtKB-KW"/>
</dbReference>
<dbReference type="GO" id="GO:0044826">
    <property type="term" value="P:viral genome integration into host DNA"/>
    <property type="evidence" value="ECO:0007669"/>
    <property type="project" value="UniProtKB-KW"/>
</dbReference>
<dbReference type="CDD" id="cd00797">
    <property type="entry name" value="INT_RitB_C_like"/>
    <property type="match status" value="1"/>
</dbReference>
<dbReference type="Gene3D" id="1.10.443.10">
    <property type="entry name" value="Intergrase catalytic core"/>
    <property type="match status" value="1"/>
</dbReference>
<dbReference type="InterPro" id="IPR044068">
    <property type="entry name" value="CB"/>
</dbReference>
<dbReference type="InterPro" id="IPR011010">
    <property type="entry name" value="DNA_brk_join_enz"/>
</dbReference>
<dbReference type="InterPro" id="IPR013762">
    <property type="entry name" value="Integrase-like_cat_sf"/>
</dbReference>
<dbReference type="InterPro" id="IPR002104">
    <property type="entry name" value="Integrase_catalytic"/>
</dbReference>
<dbReference type="InterPro" id="IPR050090">
    <property type="entry name" value="Tyrosine_recombinase_XerCD"/>
</dbReference>
<dbReference type="PANTHER" id="PTHR30349:SF41">
    <property type="entry name" value="INTEGRASE_RECOMBINASE PROTEIN MJ0367-RELATED"/>
    <property type="match status" value="1"/>
</dbReference>
<dbReference type="PANTHER" id="PTHR30349">
    <property type="entry name" value="PHAGE INTEGRASE-RELATED"/>
    <property type="match status" value="1"/>
</dbReference>
<dbReference type="Pfam" id="PF00589">
    <property type="entry name" value="Phage_integrase"/>
    <property type="match status" value="1"/>
</dbReference>
<dbReference type="SUPFAM" id="SSF56349">
    <property type="entry name" value="DNA breaking-rejoining enzymes"/>
    <property type="match status" value="1"/>
</dbReference>
<dbReference type="PROSITE" id="PS51900">
    <property type="entry name" value="CB"/>
    <property type="match status" value="1"/>
</dbReference>
<dbReference type="PROSITE" id="PS51898">
    <property type="entry name" value="TYR_RECOMBINASE"/>
    <property type="match status" value="1"/>
</dbReference>
<name>Y4RE_SINFN</name>
<comment type="similarity">
    <text evidence="3">Belongs to the 'phage' integrase family.</text>
</comment>
<gene>
    <name type="ordered locus">NGR_a01820</name>
    <name type="ORF">y4rE</name>
</gene>